<accession>Q9PR21</accession>
<feature type="chain" id="PRO_0000159516" description="Cysteine--tRNA ligase">
    <location>
        <begin position="1"/>
        <end position="436"/>
    </location>
</feature>
<feature type="short sequence motif" description="'HIGH' region">
    <location>
        <begin position="26"/>
        <end position="36"/>
    </location>
</feature>
<feature type="short sequence motif" description="'KMSKS' region">
    <location>
        <begin position="259"/>
        <end position="263"/>
    </location>
</feature>
<feature type="binding site" evidence="1">
    <location>
        <position position="24"/>
    </location>
    <ligand>
        <name>Zn(2+)</name>
        <dbReference type="ChEBI" id="CHEBI:29105"/>
    </ligand>
</feature>
<feature type="binding site" evidence="1">
    <location>
        <position position="202"/>
    </location>
    <ligand>
        <name>Zn(2+)</name>
        <dbReference type="ChEBI" id="CHEBI:29105"/>
    </ligand>
</feature>
<feature type="binding site" evidence="1">
    <location>
        <position position="227"/>
    </location>
    <ligand>
        <name>Zn(2+)</name>
        <dbReference type="ChEBI" id="CHEBI:29105"/>
    </ligand>
</feature>
<feature type="binding site" evidence="1">
    <location>
        <position position="231"/>
    </location>
    <ligand>
        <name>Zn(2+)</name>
        <dbReference type="ChEBI" id="CHEBI:29105"/>
    </ligand>
</feature>
<feature type="binding site" evidence="1">
    <location>
        <position position="262"/>
    </location>
    <ligand>
        <name>ATP</name>
        <dbReference type="ChEBI" id="CHEBI:30616"/>
    </ligand>
</feature>
<protein>
    <recommendedName>
        <fullName evidence="1">Cysteine--tRNA ligase</fullName>
        <ecNumber evidence="1">6.1.1.16</ecNumber>
    </recommendedName>
    <alternativeName>
        <fullName evidence="1">Cysteinyl-tRNA synthetase</fullName>
        <shortName evidence="1">CysRS</shortName>
    </alternativeName>
</protein>
<gene>
    <name evidence="1" type="primary">cysS</name>
    <name type="ordered locus">UU123</name>
</gene>
<comment type="catalytic activity">
    <reaction evidence="1">
        <text>tRNA(Cys) + L-cysteine + ATP = L-cysteinyl-tRNA(Cys) + AMP + diphosphate</text>
        <dbReference type="Rhea" id="RHEA:17773"/>
        <dbReference type="Rhea" id="RHEA-COMP:9661"/>
        <dbReference type="Rhea" id="RHEA-COMP:9679"/>
        <dbReference type="ChEBI" id="CHEBI:30616"/>
        <dbReference type="ChEBI" id="CHEBI:33019"/>
        <dbReference type="ChEBI" id="CHEBI:35235"/>
        <dbReference type="ChEBI" id="CHEBI:78442"/>
        <dbReference type="ChEBI" id="CHEBI:78517"/>
        <dbReference type="ChEBI" id="CHEBI:456215"/>
        <dbReference type="EC" id="6.1.1.16"/>
    </reaction>
</comment>
<comment type="cofactor">
    <cofactor evidence="1">
        <name>Zn(2+)</name>
        <dbReference type="ChEBI" id="CHEBI:29105"/>
    </cofactor>
    <text evidence="1">Binds 1 zinc ion per subunit.</text>
</comment>
<comment type="subunit">
    <text evidence="1">Monomer.</text>
</comment>
<comment type="subcellular location">
    <subcellularLocation>
        <location evidence="1">Cytoplasm</location>
    </subcellularLocation>
</comment>
<comment type="similarity">
    <text evidence="1">Belongs to the class-I aminoacyl-tRNA synthetase family.</text>
</comment>
<organism>
    <name type="scientific">Ureaplasma parvum serovar 3 (strain ATCC 700970)</name>
    <dbReference type="NCBI Taxonomy" id="273119"/>
    <lineage>
        <taxon>Bacteria</taxon>
        <taxon>Bacillati</taxon>
        <taxon>Mycoplasmatota</taxon>
        <taxon>Mycoplasmoidales</taxon>
        <taxon>Mycoplasmoidaceae</taxon>
        <taxon>Ureaplasma</taxon>
    </lineage>
</organism>
<name>SYC_UREPA</name>
<evidence type="ECO:0000255" key="1">
    <source>
        <dbReference type="HAMAP-Rule" id="MF_00041"/>
    </source>
</evidence>
<dbReference type="EC" id="6.1.1.16" evidence="1"/>
<dbReference type="EMBL" id="AF222894">
    <property type="protein sequence ID" value="AAF30529.1"/>
    <property type="molecule type" value="Genomic_DNA"/>
</dbReference>
<dbReference type="RefSeq" id="WP_006689137.1">
    <property type="nucleotide sequence ID" value="NC_002162.1"/>
</dbReference>
<dbReference type="SMR" id="Q9PR21"/>
<dbReference type="STRING" id="273119.UU123"/>
<dbReference type="EnsemblBacteria" id="AAF30529">
    <property type="protein sequence ID" value="AAF30529"/>
    <property type="gene ID" value="UU123"/>
</dbReference>
<dbReference type="GeneID" id="29672271"/>
<dbReference type="KEGG" id="uur:UU123"/>
<dbReference type="eggNOG" id="COG0215">
    <property type="taxonomic scope" value="Bacteria"/>
</dbReference>
<dbReference type="HOGENOM" id="CLU_013528_0_0_14"/>
<dbReference type="OrthoDB" id="9815130at2"/>
<dbReference type="Proteomes" id="UP000000423">
    <property type="component" value="Chromosome"/>
</dbReference>
<dbReference type="GO" id="GO:0005829">
    <property type="term" value="C:cytosol"/>
    <property type="evidence" value="ECO:0007669"/>
    <property type="project" value="TreeGrafter"/>
</dbReference>
<dbReference type="GO" id="GO:0005524">
    <property type="term" value="F:ATP binding"/>
    <property type="evidence" value="ECO:0007669"/>
    <property type="project" value="UniProtKB-UniRule"/>
</dbReference>
<dbReference type="GO" id="GO:0004817">
    <property type="term" value="F:cysteine-tRNA ligase activity"/>
    <property type="evidence" value="ECO:0007669"/>
    <property type="project" value="UniProtKB-UniRule"/>
</dbReference>
<dbReference type="GO" id="GO:0008270">
    <property type="term" value="F:zinc ion binding"/>
    <property type="evidence" value="ECO:0007669"/>
    <property type="project" value="UniProtKB-UniRule"/>
</dbReference>
<dbReference type="GO" id="GO:0006423">
    <property type="term" value="P:cysteinyl-tRNA aminoacylation"/>
    <property type="evidence" value="ECO:0007669"/>
    <property type="project" value="UniProtKB-UniRule"/>
</dbReference>
<dbReference type="CDD" id="cd00672">
    <property type="entry name" value="CysRS_core"/>
    <property type="match status" value="1"/>
</dbReference>
<dbReference type="Gene3D" id="1.20.120.1910">
    <property type="entry name" value="Cysteine-tRNA ligase, C-terminal anti-codon recognition domain"/>
    <property type="match status" value="1"/>
</dbReference>
<dbReference type="Gene3D" id="3.40.50.620">
    <property type="entry name" value="HUPs"/>
    <property type="match status" value="1"/>
</dbReference>
<dbReference type="HAMAP" id="MF_00041">
    <property type="entry name" value="Cys_tRNA_synth"/>
    <property type="match status" value="1"/>
</dbReference>
<dbReference type="InterPro" id="IPR015803">
    <property type="entry name" value="Cys-tRNA-ligase"/>
</dbReference>
<dbReference type="InterPro" id="IPR024909">
    <property type="entry name" value="Cys-tRNA/MSH_ligase"/>
</dbReference>
<dbReference type="InterPro" id="IPR014729">
    <property type="entry name" value="Rossmann-like_a/b/a_fold"/>
</dbReference>
<dbReference type="InterPro" id="IPR032678">
    <property type="entry name" value="tRNA-synt_1_cat_dom"/>
</dbReference>
<dbReference type="InterPro" id="IPR009080">
    <property type="entry name" value="tRNAsynth_Ia_anticodon-bd"/>
</dbReference>
<dbReference type="NCBIfam" id="TIGR00435">
    <property type="entry name" value="cysS"/>
    <property type="match status" value="1"/>
</dbReference>
<dbReference type="PANTHER" id="PTHR10890:SF3">
    <property type="entry name" value="CYSTEINE--TRNA LIGASE, CYTOPLASMIC"/>
    <property type="match status" value="1"/>
</dbReference>
<dbReference type="PANTHER" id="PTHR10890">
    <property type="entry name" value="CYSTEINYL-TRNA SYNTHETASE"/>
    <property type="match status" value="1"/>
</dbReference>
<dbReference type="Pfam" id="PF01406">
    <property type="entry name" value="tRNA-synt_1e"/>
    <property type="match status" value="1"/>
</dbReference>
<dbReference type="PRINTS" id="PR00983">
    <property type="entry name" value="TRNASYNTHCYS"/>
</dbReference>
<dbReference type="SUPFAM" id="SSF47323">
    <property type="entry name" value="Anticodon-binding domain of a subclass of class I aminoacyl-tRNA synthetases"/>
    <property type="match status" value="1"/>
</dbReference>
<dbReference type="SUPFAM" id="SSF52374">
    <property type="entry name" value="Nucleotidylyl transferase"/>
    <property type="match status" value="1"/>
</dbReference>
<proteinExistence type="inferred from homology"/>
<sequence>MKLYDSYSNQLVEINDELISIYNCGPTVYNHIHIGNARPLITMDVLYRFLKKHNIKTKYVLNITDIDDKIINYALANNLKELEVSEYYFNEYLKIKKALNTLEMINPKVSTHMDKIIDYIQKLIDKQAGYFIGDDVYFDTKKALNYGQLSKRDLENDIVGMRIESAANKHNPNDFILWKKTNKGIMWNTPWGIGRPGWHSECSCLINTYIGEQVSIHGGGIDLKFPHHENENAQNQVLYNKNLAKVWMHFGLVNINNEKMSKSLNNFILVKDLLAEYDYQVVRWFFYQADYKQPIKFSHEIMKQNEKEILKIKNAIYNAKNYLYFNNQLKSLTQIDHFELFDERINDDLDFVGIVDLIHISVKKINILIKENKDMNELKLNLTQLLYMLDILGINFVDLHNDENLALLNTWKNYVDKKDYVKADELRKQLINIGIL</sequence>
<reference key="1">
    <citation type="journal article" date="2000" name="Nature">
        <title>The complete sequence of the mucosal pathogen Ureaplasma urealyticum.</title>
        <authorList>
            <person name="Glass J.I."/>
            <person name="Lefkowitz E.J."/>
            <person name="Glass J.S."/>
            <person name="Heiner C.R."/>
            <person name="Chen E.Y."/>
            <person name="Cassell G.H."/>
        </authorList>
    </citation>
    <scope>NUCLEOTIDE SEQUENCE [LARGE SCALE GENOMIC DNA]</scope>
    <source>
        <strain>ATCC 700970</strain>
    </source>
</reference>
<keyword id="KW-0030">Aminoacyl-tRNA synthetase</keyword>
<keyword id="KW-0067">ATP-binding</keyword>
<keyword id="KW-0963">Cytoplasm</keyword>
<keyword id="KW-0436">Ligase</keyword>
<keyword id="KW-0479">Metal-binding</keyword>
<keyword id="KW-0547">Nucleotide-binding</keyword>
<keyword id="KW-0648">Protein biosynthesis</keyword>
<keyword id="KW-1185">Reference proteome</keyword>
<keyword id="KW-0862">Zinc</keyword>